<evidence type="ECO:0000255" key="1">
    <source>
        <dbReference type="HAMAP-Rule" id="MF_01369"/>
    </source>
</evidence>
<evidence type="ECO:0000305" key="2"/>
<dbReference type="EMBL" id="CP000849">
    <property type="protein sequence ID" value="ABV78793.1"/>
    <property type="molecule type" value="Genomic_DNA"/>
</dbReference>
<dbReference type="RefSeq" id="WP_011477719.1">
    <property type="nucleotide sequence ID" value="NC_009883.1"/>
</dbReference>
<dbReference type="SMR" id="A8GVB6"/>
<dbReference type="KEGG" id="rbo:A1I_02045"/>
<dbReference type="HOGENOM" id="CLU_037562_3_2_5"/>
<dbReference type="GO" id="GO:1990904">
    <property type="term" value="C:ribonucleoprotein complex"/>
    <property type="evidence" value="ECO:0007669"/>
    <property type="project" value="UniProtKB-KW"/>
</dbReference>
<dbReference type="GO" id="GO:0005840">
    <property type="term" value="C:ribosome"/>
    <property type="evidence" value="ECO:0007669"/>
    <property type="project" value="UniProtKB-KW"/>
</dbReference>
<dbReference type="GO" id="GO:0019843">
    <property type="term" value="F:rRNA binding"/>
    <property type="evidence" value="ECO:0007669"/>
    <property type="project" value="UniProtKB-UniRule"/>
</dbReference>
<dbReference type="GO" id="GO:0003735">
    <property type="term" value="F:structural constituent of ribosome"/>
    <property type="evidence" value="ECO:0007669"/>
    <property type="project" value="InterPro"/>
</dbReference>
<dbReference type="GO" id="GO:0006412">
    <property type="term" value="P:translation"/>
    <property type="evidence" value="ECO:0007669"/>
    <property type="project" value="UniProtKB-UniRule"/>
</dbReference>
<dbReference type="FunFam" id="3.30.70.330:FF:000001">
    <property type="entry name" value="50S ribosomal protein L23"/>
    <property type="match status" value="1"/>
</dbReference>
<dbReference type="Gene3D" id="3.30.70.330">
    <property type="match status" value="1"/>
</dbReference>
<dbReference type="HAMAP" id="MF_01369_B">
    <property type="entry name" value="Ribosomal_uL23_B"/>
    <property type="match status" value="1"/>
</dbReference>
<dbReference type="InterPro" id="IPR012677">
    <property type="entry name" value="Nucleotide-bd_a/b_plait_sf"/>
</dbReference>
<dbReference type="InterPro" id="IPR013025">
    <property type="entry name" value="Ribosomal_uL23-like"/>
</dbReference>
<dbReference type="InterPro" id="IPR012678">
    <property type="entry name" value="Ribosomal_uL23/eL15/eS24_sf"/>
</dbReference>
<dbReference type="NCBIfam" id="NF004359">
    <property type="entry name" value="PRK05738.1-3"/>
    <property type="match status" value="1"/>
</dbReference>
<dbReference type="NCBIfam" id="NF004363">
    <property type="entry name" value="PRK05738.2-4"/>
    <property type="match status" value="1"/>
</dbReference>
<dbReference type="PANTHER" id="PTHR11620">
    <property type="entry name" value="60S RIBOSOMAL PROTEIN L23A"/>
    <property type="match status" value="1"/>
</dbReference>
<dbReference type="Pfam" id="PF00276">
    <property type="entry name" value="Ribosomal_L23"/>
    <property type="match status" value="1"/>
</dbReference>
<dbReference type="SUPFAM" id="SSF54189">
    <property type="entry name" value="Ribosomal proteins S24e, L23 and L15e"/>
    <property type="match status" value="1"/>
</dbReference>
<name>RL23_RICB8</name>
<gene>
    <name evidence="1" type="primary">rplW</name>
    <name type="ordered locus">A1I_02045</name>
</gene>
<organism>
    <name type="scientific">Rickettsia bellii (strain OSU 85-389)</name>
    <dbReference type="NCBI Taxonomy" id="391896"/>
    <lineage>
        <taxon>Bacteria</taxon>
        <taxon>Pseudomonadati</taxon>
        <taxon>Pseudomonadota</taxon>
        <taxon>Alphaproteobacteria</taxon>
        <taxon>Rickettsiales</taxon>
        <taxon>Rickettsiaceae</taxon>
        <taxon>Rickettsieae</taxon>
        <taxon>Rickettsia</taxon>
        <taxon>belli group</taxon>
    </lineage>
</organism>
<accession>A8GVB6</accession>
<proteinExistence type="inferred from homology"/>
<reference key="1">
    <citation type="submission" date="2007-09" db="EMBL/GenBank/DDBJ databases">
        <title>Complete genome sequencing of Rickettsia bellii.</title>
        <authorList>
            <person name="Madan A."/>
            <person name="Lee H."/>
            <person name="Madan A."/>
            <person name="Yoon J.-G."/>
            <person name="Ryu G.-Y."/>
            <person name="Dasch G."/>
            <person name="Ereemeva M."/>
        </authorList>
    </citation>
    <scope>NUCLEOTIDE SEQUENCE [LARGE SCALE GENOMIC DNA]</scope>
    <source>
        <strain>OSU 85-389</strain>
    </source>
</reference>
<comment type="function">
    <text evidence="1">One of the early assembly proteins it binds 23S rRNA. One of the proteins that surrounds the polypeptide exit tunnel on the outside of the ribosome. Forms the main docking site for trigger factor binding to the ribosome.</text>
</comment>
<comment type="subunit">
    <text evidence="1">Part of the 50S ribosomal subunit. Contacts protein L29, and trigger factor when it is bound to the ribosome.</text>
</comment>
<comment type="similarity">
    <text evidence="1">Belongs to the universal ribosomal protein uL23 family.</text>
</comment>
<protein>
    <recommendedName>
        <fullName evidence="1">Large ribosomal subunit protein uL23</fullName>
    </recommendedName>
    <alternativeName>
        <fullName evidence="2">50S ribosomal protein L23</fullName>
    </alternativeName>
</protein>
<keyword id="KW-0687">Ribonucleoprotein</keyword>
<keyword id="KW-0689">Ribosomal protein</keyword>
<keyword id="KW-0694">RNA-binding</keyword>
<keyword id="KW-0699">rRNA-binding</keyword>
<feature type="chain" id="PRO_1000068149" description="Large ribosomal subunit protein uL23">
    <location>
        <begin position="1"/>
        <end position="98"/>
    </location>
</feature>
<sequence length="98" mass="11391">MSSYKYYDLIRRPVITEKTTLLSEQNKYTFYVDKLAEKLAVKKAIEEIFKVKVKKVNILNVKGKKKRFKGVIGRQVDRKKAVVTLEKDHNIDFAGGIK</sequence>